<name>PUP23_ARATH</name>
<feature type="chain" id="PRO_0000415753" description="Probable purine permease 23">
    <location>
        <begin position="1"/>
        <end position="394"/>
    </location>
</feature>
<feature type="transmembrane region" description="Helical" evidence="2">
    <location>
        <begin position="43"/>
        <end position="63"/>
    </location>
</feature>
<feature type="transmembrane region" description="Helical" evidence="2">
    <location>
        <begin position="85"/>
        <end position="105"/>
    </location>
</feature>
<feature type="transmembrane region" description="Helical" evidence="2">
    <location>
        <begin position="124"/>
        <end position="144"/>
    </location>
</feature>
<feature type="transmembrane region" description="Helical" evidence="2">
    <location>
        <begin position="152"/>
        <end position="172"/>
    </location>
</feature>
<feature type="transmembrane region" description="Helical" evidence="2">
    <location>
        <begin position="180"/>
        <end position="200"/>
    </location>
</feature>
<feature type="transmembrane region" description="Helical" evidence="2">
    <location>
        <begin position="211"/>
        <end position="231"/>
    </location>
</feature>
<feature type="transmembrane region" description="Helical" evidence="2">
    <location>
        <begin position="254"/>
        <end position="274"/>
    </location>
</feature>
<feature type="transmembrane region" description="Helical" evidence="2">
    <location>
        <begin position="301"/>
        <end position="321"/>
    </location>
</feature>
<feature type="transmembrane region" description="Helical" evidence="2">
    <location>
        <begin position="328"/>
        <end position="348"/>
    </location>
</feature>
<feature type="transmembrane region" description="Helical" evidence="2">
    <location>
        <begin position="352"/>
        <end position="372"/>
    </location>
</feature>
<feature type="region of interest" description="Disordered" evidence="3">
    <location>
        <begin position="1"/>
        <end position="24"/>
    </location>
</feature>
<feature type="compositionally biased region" description="Basic and acidic residues" evidence="3">
    <location>
        <begin position="1"/>
        <end position="20"/>
    </location>
</feature>
<feature type="modified residue" description="Phosphoserine" evidence="1">
    <location>
        <position position="29"/>
    </location>
</feature>
<gene>
    <name type="primary">PUP23</name>
    <name type="ordered locus">At1g57980</name>
    <name type="ORF">F13D13.2</name>
    <name type="ORF">T15M6</name>
</gene>
<reference key="1">
    <citation type="journal article" date="2000" name="Nature">
        <title>Sequence and analysis of chromosome 1 of the plant Arabidopsis thaliana.</title>
        <authorList>
            <person name="Theologis A."/>
            <person name="Ecker J.R."/>
            <person name="Palm C.J."/>
            <person name="Federspiel N.A."/>
            <person name="Kaul S."/>
            <person name="White O."/>
            <person name="Alonso J."/>
            <person name="Altafi H."/>
            <person name="Araujo R."/>
            <person name="Bowman C.L."/>
            <person name="Brooks S.Y."/>
            <person name="Buehler E."/>
            <person name="Chan A."/>
            <person name="Chao Q."/>
            <person name="Chen H."/>
            <person name="Cheuk R.F."/>
            <person name="Chin C.W."/>
            <person name="Chung M.K."/>
            <person name="Conn L."/>
            <person name="Conway A.B."/>
            <person name="Conway A.R."/>
            <person name="Creasy T.H."/>
            <person name="Dewar K."/>
            <person name="Dunn P."/>
            <person name="Etgu P."/>
            <person name="Feldblyum T.V."/>
            <person name="Feng J.-D."/>
            <person name="Fong B."/>
            <person name="Fujii C.Y."/>
            <person name="Gill J.E."/>
            <person name="Goldsmith A.D."/>
            <person name="Haas B."/>
            <person name="Hansen N.F."/>
            <person name="Hughes B."/>
            <person name="Huizar L."/>
            <person name="Hunter J.L."/>
            <person name="Jenkins J."/>
            <person name="Johnson-Hopson C."/>
            <person name="Khan S."/>
            <person name="Khaykin E."/>
            <person name="Kim C.J."/>
            <person name="Koo H.L."/>
            <person name="Kremenetskaia I."/>
            <person name="Kurtz D.B."/>
            <person name="Kwan A."/>
            <person name="Lam B."/>
            <person name="Langin-Hooper S."/>
            <person name="Lee A."/>
            <person name="Lee J.M."/>
            <person name="Lenz C.A."/>
            <person name="Li J.H."/>
            <person name="Li Y.-P."/>
            <person name="Lin X."/>
            <person name="Liu S.X."/>
            <person name="Liu Z.A."/>
            <person name="Luros J.S."/>
            <person name="Maiti R."/>
            <person name="Marziali A."/>
            <person name="Militscher J."/>
            <person name="Miranda M."/>
            <person name="Nguyen M."/>
            <person name="Nierman W.C."/>
            <person name="Osborne B.I."/>
            <person name="Pai G."/>
            <person name="Peterson J."/>
            <person name="Pham P.K."/>
            <person name="Rizzo M."/>
            <person name="Rooney T."/>
            <person name="Rowley D."/>
            <person name="Sakano H."/>
            <person name="Salzberg S.L."/>
            <person name="Schwartz J.R."/>
            <person name="Shinn P."/>
            <person name="Southwick A.M."/>
            <person name="Sun H."/>
            <person name="Tallon L.J."/>
            <person name="Tambunga G."/>
            <person name="Toriumi M.J."/>
            <person name="Town C.D."/>
            <person name="Utterback T."/>
            <person name="Van Aken S."/>
            <person name="Vaysberg M."/>
            <person name="Vysotskaia V.S."/>
            <person name="Walker M."/>
            <person name="Wu D."/>
            <person name="Yu G."/>
            <person name="Fraser C.M."/>
            <person name="Venter J.C."/>
            <person name="Davis R.W."/>
        </authorList>
    </citation>
    <scope>NUCLEOTIDE SEQUENCE [LARGE SCALE GENOMIC DNA]</scope>
    <source>
        <strain>cv. Columbia</strain>
    </source>
</reference>
<reference key="2">
    <citation type="journal article" date="2017" name="Plant J.">
        <title>Araport11: a complete reannotation of the Arabidopsis thaliana reference genome.</title>
        <authorList>
            <person name="Cheng C.Y."/>
            <person name="Krishnakumar V."/>
            <person name="Chan A.P."/>
            <person name="Thibaud-Nissen F."/>
            <person name="Schobel S."/>
            <person name="Town C.D."/>
        </authorList>
    </citation>
    <scope>GENOME REANNOTATION</scope>
    <source>
        <strain>cv. Columbia</strain>
    </source>
</reference>
<reference key="3">
    <citation type="journal article" date="2002" name="Science">
        <title>Functional annotation of a full-length Arabidopsis cDNA collection.</title>
        <authorList>
            <person name="Seki M."/>
            <person name="Narusaka M."/>
            <person name="Kamiya A."/>
            <person name="Ishida J."/>
            <person name="Satou M."/>
            <person name="Sakurai T."/>
            <person name="Nakajima M."/>
            <person name="Enju A."/>
            <person name="Akiyama K."/>
            <person name="Oono Y."/>
            <person name="Muramatsu M."/>
            <person name="Hayashizaki Y."/>
            <person name="Kawai J."/>
            <person name="Carninci P."/>
            <person name="Itoh M."/>
            <person name="Ishii Y."/>
            <person name="Arakawa T."/>
            <person name="Shibata K."/>
            <person name="Shinagawa A."/>
            <person name="Shinozaki K."/>
        </authorList>
    </citation>
    <scope>NUCLEOTIDE SEQUENCE [LARGE SCALE MRNA]</scope>
    <source>
        <strain>cv. Columbia</strain>
    </source>
</reference>
<reference key="4">
    <citation type="journal article" date="2003" name="Science">
        <title>Empirical analysis of transcriptional activity in the Arabidopsis genome.</title>
        <authorList>
            <person name="Yamada K."/>
            <person name="Lim J."/>
            <person name="Dale J.M."/>
            <person name="Chen H."/>
            <person name="Shinn P."/>
            <person name="Palm C.J."/>
            <person name="Southwick A.M."/>
            <person name="Wu H.C."/>
            <person name="Kim C.J."/>
            <person name="Nguyen M."/>
            <person name="Pham P.K."/>
            <person name="Cheuk R.F."/>
            <person name="Karlin-Newmann G."/>
            <person name="Liu S.X."/>
            <person name="Lam B."/>
            <person name="Sakano H."/>
            <person name="Wu T."/>
            <person name="Yu G."/>
            <person name="Miranda M."/>
            <person name="Quach H.L."/>
            <person name="Tripp M."/>
            <person name="Chang C.H."/>
            <person name="Lee J.M."/>
            <person name="Toriumi M.J."/>
            <person name="Chan M.M."/>
            <person name="Tang C.C."/>
            <person name="Onodera C.S."/>
            <person name="Deng J.M."/>
            <person name="Akiyama K."/>
            <person name="Ansari Y."/>
            <person name="Arakawa T."/>
            <person name="Banh J."/>
            <person name="Banno F."/>
            <person name="Bowser L."/>
            <person name="Brooks S.Y."/>
            <person name="Carninci P."/>
            <person name="Chao Q."/>
            <person name="Choy N."/>
            <person name="Enju A."/>
            <person name="Goldsmith A.D."/>
            <person name="Gurjal M."/>
            <person name="Hansen N.F."/>
            <person name="Hayashizaki Y."/>
            <person name="Johnson-Hopson C."/>
            <person name="Hsuan V.W."/>
            <person name="Iida K."/>
            <person name="Karnes M."/>
            <person name="Khan S."/>
            <person name="Koesema E."/>
            <person name="Ishida J."/>
            <person name="Jiang P.X."/>
            <person name="Jones T."/>
            <person name="Kawai J."/>
            <person name="Kamiya A."/>
            <person name="Meyers C."/>
            <person name="Nakajima M."/>
            <person name="Narusaka M."/>
            <person name="Seki M."/>
            <person name="Sakurai T."/>
            <person name="Satou M."/>
            <person name="Tamse R."/>
            <person name="Vaysberg M."/>
            <person name="Wallender E.K."/>
            <person name="Wong C."/>
            <person name="Yamamura Y."/>
            <person name="Yuan S."/>
            <person name="Shinozaki K."/>
            <person name="Davis R.W."/>
            <person name="Theologis A."/>
            <person name="Ecker J.R."/>
        </authorList>
    </citation>
    <scope>NUCLEOTIDE SEQUENCE [LARGE SCALE MRNA]</scope>
    <source>
        <strain>cv. Columbia</strain>
    </source>
</reference>
<proteinExistence type="evidence at transcript level"/>
<sequence>MEMTEASKHTTTHEESEHVQNPEPDQVLSQRQLLQLNQKKWWISVLICLFLVLLGDSLVILLLNFFYVQDRREDNNQDLQYKGTWMQALIQNAAFPILIPLFFIFPSPKPNPETINTRFLSIRLILLYFSLGVLVAAHSKLYALGKLYSSYGFFMLISGSQLIFTLIFTAIINRFKFTRWIIISIVLILVSYAFGGPVFSGEPDENEHFYGIQAWLTFAASVAFALSLCLVQLSFEKLLVKTKRYGNKKVFRMVLEMQICVSSVASVVCLVGLFASGEYKELKGDSERFKKGETYYVLSLVGLALSWQVWAVGLIGLVLYVSSVFSNIVHMCASPLMAFIVVLAFDFIDDDFSWPRIGALIGSVLALGSYFYTLHKRNKKKMVEFNQSENNVEV</sequence>
<dbReference type="EMBL" id="AC079604">
    <property type="status" value="NOT_ANNOTATED_CDS"/>
    <property type="molecule type" value="Genomic_DNA"/>
</dbReference>
<dbReference type="EMBL" id="AC079991">
    <property type="protein sequence ID" value="AAG50667.1"/>
    <property type="molecule type" value="Genomic_DNA"/>
</dbReference>
<dbReference type="EMBL" id="CP002684">
    <property type="protein sequence ID" value="AEE33481.1"/>
    <property type="molecule type" value="Genomic_DNA"/>
</dbReference>
<dbReference type="EMBL" id="AK118723">
    <property type="protein sequence ID" value="BAC43317.1"/>
    <property type="molecule type" value="mRNA"/>
</dbReference>
<dbReference type="EMBL" id="BT005404">
    <property type="protein sequence ID" value="AAO63824.1"/>
    <property type="molecule type" value="mRNA"/>
</dbReference>
<dbReference type="RefSeq" id="NP_176099.1">
    <property type="nucleotide sequence ID" value="NM_104583.4"/>
</dbReference>
<dbReference type="SMR" id="Q9C654"/>
<dbReference type="BioGRID" id="27390">
    <property type="interactions" value="6"/>
</dbReference>
<dbReference type="IntAct" id="Q9C654">
    <property type="interactions" value="4"/>
</dbReference>
<dbReference type="PaxDb" id="3702-AT1G57980.1"/>
<dbReference type="ProteomicsDB" id="226118"/>
<dbReference type="EnsemblPlants" id="AT1G57980.1">
    <property type="protein sequence ID" value="AT1G57980.1"/>
    <property type="gene ID" value="AT1G57980"/>
</dbReference>
<dbReference type="GeneID" id="842165"/>
<dbReference type="Gramene" id="AT1G57980.1">
    <property type="protein sequence ID" value="AT1G57980.1"/>
    <property type="gene ID" value="AT1G57980"/>
</dbReference>
<dbReference type="KEGG" id="ath:AT1G57980"/>
<dbReference type="Araport" id="AT1G57980"/>
<dbReference type="TAIR" id="AT1G57980"/>
<dbReference type="eggNOG" id="ENOG502QRUH">
    <property type="taxonomic scope" value="Eukaryota"/>
</dbReference>
<dbReference type="HOGENOM" id="CLU_043459_2_1_1"/>
<dbReference type="InParanoid" id="Q9C654"/>
<dbReference type="PhylomeDB" id="Q9C654"/>
<dbReference type="PRO" id="PR:Q9C654"/>
<dbReference type="Proteomes" id="UP000006548">
    <property type="component" value="Chromosome 1"/>
</dbReference>
<dbReference type="ExpressionAtlas" id="Q9C654">
    <property type="expression patterns" value="baseline and differential"/>
</dbReference>
<dbReference type="GO" id="GO:0016020">
    <property type="term" value="C:membrane"/>
    <property type="evidence" value="ECO:0007669"/>
    <property type="project" value="UniProtKB-SubCell"/>
</dbReference>
<dbReference type="GO" id="GO:0005345">
    <property type="term" value="F:purine nucleobase transmembrane transporter activity"/>
    <property type="evidence" value="ECO:0007669"/>
    <property type="project" value="UniProtKB-ARBA"/>
</dbReference>
<dbReference type="GO" id="GO:0015211">
    <property type="term" value="F:purine nucleoside transmembrane transporter activity"/>
    <property type="evidence" value="ECO:0007669"/>
    <property type="project" value="InterPro"/>
</dbReference>
<dbReference type="InterPro" id="IPR030182">
    <property type="entry name" value="PUP_plant"/>
</dbReference>
<dbReference type="PANTHER" id="PTHR31376">
    <property type="entry name" value="OS09G0467300 PROTEIN-RELATED"/>
    <property type="match status" value="1"/>
</dbReference>
<dbReference type="PANTHER" id="PTHR31376:SF34">
    <property type="entry name" value="PURINE PERMEASE 17-RELATED"/>
    <property type="match status" value="1"/>
</dbReference>
<dbReference type="Pfam" id="PF16913">
    <property type="entry name" value="PUNUT"/>
    <property type="match status" value="1"/>
</dbReference>
<protein>
    <recommendedName>
        <fullName>Probable purine permease 23</fullName>
        <shortName>AtPUP23</shortName>
    </recommendedName>
</protein>
<organism>
    <name type="scientific">Arabidopsis thaliana</name>
    <name type="common">Mouse-ear cress</name>
    <dbReference type="NCBI Taxonomy" id="3702"/>
    <lineage>
        <taxon>Eukaryota</taxon>
        <taxon>Viridiplantae</taxon>
        <taxon>Streptophyta</taxon>
        <taxon>Embryophyta</taxon>
        <taxon>Tracheophyta</taxon>
        <taxon>Spermatophyta</taxon>
        <taxon>Magnoliopsida</taxon>
        <taxon>eudicotyledons</taxon>
        <taxon>Gunneridae</taxon>
        <taxon>Pentapetalae</taxon>
        <taxon>rosids</taxon>
        <taxon>malvids</taxon>
        <taxon>Brassicales</taxon>
        <taxon>Brassicaceae</taxon>
        <taxon>Camelineae</taxon>
        <taxon>Arabidopsis</taxon>
    </lineage>
</organism>
<keyword id="KW-0472">Membrane</keyword>
<keyword id="KW-0597">Phosphoprotein</keyword>
<keyword id="KW-1185">Reference proteome</keyword>
<keyword id="KW-0812">Transmembrane</keyword>
<keyword id="KW-1133">Transmembrane helix</keyword>
<keyword id="KW-0813">Transport</keyword>
<accession>Q9C654</accession>
<comment type="subcellular location">
    <subcellularLocation>
        <location evidence="4">Membrane</location>
        <topology evidence="4">Multi-pass membrane protein</topology>
    </subcellularLocation>
</comment>
<comment type="similarity">
    <text evidence="4">Belongs to the purine permeases (TC 2.A.7.14) family.</text>
</comment>
<evidence type="ECO:0000250" key="1">
    <source>
        <dbReference type="UniProtKB" id="Q9C508"/>
    </source>
</evidence>
<evidence type="ECO:0000255" key="2"/>
<evidence type="ECO:0000256" key="3">
    <source>
        <dbReference type="SAM" id="MobiDB-lite"/>
    </source>
</evidence>
<evidence type="ECO:0000305" key="4"/>